<comment type="function">
    <text evidence="1">Component of the A-type ATP synthase that produces ATP from ADP in the presence of a proton gradient across the membrane.</text>
</comment>
<comment type="subunit">
    <text evidence="1">Has multiple subunits with at least A(3), B(3), C, D, E, F, H, I and proteolipid K(x).</text>
</comment>
<comment type="subcellular location">
    <subcellularLocation>
        <location evidence="1">Cell membrane</location>
        <topology evidence="1">Peripheral membrane protein</topology>
    </subcellularLocation>
</comment>
<comment type="similarity">
    <text evidence="1">Belongs to the V-ATPase E subunit family.</text>
</comment>
<name>AATE_METBU</name>
<accession>Q12WL4</accession>
<evidence type="ECO:0000255" key="1">
    <source>
        <dbReference type="HAMAP-Rule" id="MF_00311"/>
    </source>
</evidence>
<protein>
    <recommendedName>
        <fullName evidence="1">A-type ATP synthase subunit E</fullName>
    </recommendedName>
</protein>
<proteinExistence type="inferred from homology"/>
<feature type="chain" id="PRO_1000059412" description="A-type ATP synthase subunit E">
    <location>
        <begin position="1"/>
        <end position="183"/>
    </location>
</feature>
<gene>
    <name evidence="1" type="primary">atpE</name>
    <name type="ordered locus">Mbur_1240</name>
</gene>
<reference key="1">
    <citation type="journal article" date="2009" name="ISME J.">
        <title>The genome sequence of the psychrophilic archaeon, Methanococcoides burtonii: the role of genome evolution in cold adaptation.</title>
        <authorList>
            <person name="Allen M.A."/>
            <person name="Lauro F.M."/>
            <person name="Williams T.J."/>
            <person name="Burg D."/>
            <person name="Siddiqui K.S."/>
            <person name="De Francisci D."/>
            <person name="Chong K.W."/>
            <person name="Pilak O."/>
            <person name="Chew H.H."/>
            <person name="De Maere M.Z."/>
            <person name="Ting L."/>
            <person name="Katrib M."/>
            <person name="Ng C."/>
            <person name="Sowers K.R."/>
            <person name="Galperin M.Y."/>
            <person name="Anderson I.J."/>
            <person name="Ivanova N."/>
            <person name="Dalin E."/>
            <person name="Martinez M."/>
            <person name="Lapidus A."/>
            <person name="Hauser L."/>
            <person name="Land M."/>
            <person name="Thomas T."/>
            <person name="Cavicchioli R."/>
        </authorList>
    </citation>
    <scope>NUCLEOTIDE SEQUENCE [LARGE SCALE GENOMIC DNA]</scope>
    <source>
        <strain>DSM 6242 / NBRC 107633 / OCM 468 / ACE-M</strain>
    </source>
</reference>
<organism>
    <name type="scientific">Methanococcoides burtonii (strain DSM 6242 / NBRC 107633 / OCM 468 / ACE-M)</name>
    <dbReference type="NCBI Taxonomy" id="259564"/>
    <lineage>
        <taxon>Archaea</taxon>
        <taxon>Methanobacteriati</taxon>
        <taxon>Methanobacteriota</taxon>
        <taxon>Stenosarchaea group</taxon>
        <taxon>Methanomicrobia</taxon>
        <taxon>Methanosarcinales</taxon>
        <taxon>Methanosarcinaceae</taxon>
        <taxon>Methanococcoides</taxon>
    </lineage>
</organism>
<sequence length="183" mass="20243">MGLETVIKDIMSAAQTEVNVINADADAEVSQILDDARQTAKKIMGDRLAKAEDDIKRLRQQEISSANLEVKRAMLNARKEVLDKVYNNAIDSIVSLPGSKQEELLKAIIDENDSNGSNIYSNKDSEKLVRKLSSLEYAGNIDCIGGLTIENSDGTVRLDYTYDMILKNVNEQSLKQTSDILFG</sequence>
<keyword id="KW-0066">ATP synthesis</keyword>
<keyword id="KW-1003">Cell membrane</keyword>
<keyword id="KW-0375">Hydrogen ion transport</keyword>
<keyword id="KW-0406">Ion transport</keyword>
<keyword id="KW-0472">Membrane</keyword>
<keyword id="KW-0813">Transport</keyword>
<dbReference type="EMBL" id="CP000300">
    <property type="protein sequence ID" value="ABE52162.1"/>
    <property type="molecule type" value="Genomic_DNA"/>
</dbReference>
<dbReference type="RefSeq" id="WP_011499308.1">
    <property type="nucleotide sequence ID" value="NC_007955.1"/>
</dbReference>
<dbReference type="SMR" id="Q12WL4"/>
<dbReference type="STRING" id="259564.Mbur_1240"/>
<dbReference type="GeneID" id="3998564"/>
<dbReference type="KEGG" id="mbu:Mbur_1240"/>
<dbReference type="HOGENOM" id="CLU_120786_0_0_2"/>
<dbReference type="OrthoDB" id="4691at2157"/>
<dbReference type="Proteomes" id="UP000001979">
    <property type="component" value="Chromosome"/>
</dbReference>
<dbReference type="GO" id="GO:0005886">
    <property type="term" value="C:plasma membrane"/>
    <property type="evidence" value="ECO:0007669"/>
    <property type="project" value="UniProtKB-SubCell"/>
</dbReference>
<dbReference type="GO" id="GO:0033178">
    <property type="term" value="C:proton-transporting two-sector ATPase complex, catalytic domain"/>
    <property type="evidence" value="ECO:0007669"/>
    <property type="project" value="InterPro"/>
</dbReference>
<dbReference type="GO" id="GO:0005524">
    <property type="term" value="F:ATP binding"/>
    <property type="evidence" value="ECO:0007669"/>
    <property type="project" value="UniProtKB-UniRule"/>
</dbReference>
<dbReference type="GO" id="GO:0046933">
    <property type="term" value="F:proton-transporting ATP synthase activity, rotational mechanism"/>
    <property type="evidence" value="ECO:0007669"/>
    <property type="project" value="UniProtKB-UniRule"/>
</dbReference>
<dbReference type="GO" id="GO:0046961">
    <property type="term" value="F:proton-transporting ATPase activity, rotational mechanism"/>
    <property type="evidence" value="ECO:0007669"/>
    <property type="project" value="InterPro"/>
</dbReference>
<dbReference type="GO" id="GO:0042777">
    <property type="term" value="P:proton motive force-driven plasma membrane ATP synthesis"/>
    <property type="evidence" value="ECO:0007669"/>
    <property type="project" value="UniProtKB-UniRule"/>
</dbReference>
<dbReference type="CDD" id="cd06503">
    <property type="entry name" value="ATP-synt_Fo_b"/>
    <property type="match status" value="1"/>
</dbReference>
<dbReference type="Gene3D" id="1.20.5.620">
    <property type="entry name" value="F1F0 ATP synthase subunit B, membrane domain"/>
    <property type="match status" value="1"/>
</dbReference>
<dbReference type="HAMAP" id="MF_00311">
    <property type="entry name" value="ATP_synth_E_arch"/>
    <property type="match status" value="1"/>
</dbReference>
<dbReference type="InterPro" id="IPR002842">
    <property type="entry name" value="ATPase_V1_Esu"/>
</dbReference>
<dbReference type="NCBIfam" id="NF002629">
    <property type="entry name" value="PRK02292.1"/>
    <property type="match status" value="1"/>
</dbReference>
<dbReference type="Pfam" id="PF01991">
    <property type="entry name" value="vATP-synt_E"/>
    <property type="match status" value="1"/>
</dbReference>
<dbReference type="SUPFAM" id="SSF160527">
    <property type="entry name" value="V-type ATPase subunit E-like"/>
    <property type="match status" value="1"/>
</dbReference>